<proteinExistence type="inferred from homology"/>
<name>ESCA_ORYLA</name>
<reference key="1">
    <citation type="journal article" date="1992" name="Proc. Natl. Acad. Sci. U.S.A.">
        <title>Evolutionary conservation pattern of zinc-finger domains of Drosophila segmentation genes.</title>
        <authorList>
            <person name="Sommer R.J."/>
            <person name="Retzlaff M."/>
            <person name="Goerlich K."/>
            <person name="Sander K."/>
            <person name="Tautz D."/>
        </authorList>
    </citation>
    <scope>NUCLEOTIDE SEQUENCE [GENOMIC DNA]</scope>
</reference>
<comment type="subcellular location">
    <subcellularLocation>
        <location evidence="2">Nucleus</location>
    </subcellularLocation>
</comment>
<comment type="similarity">
    <text evidence="2">Belongs to the snail C2H2-type zinc-finger protein family.</text>
</comment>
<organism>
    <name type="scientific">Oryzias latipes</name>
    <name type="common">Japanese rice fish</name>
    <name type="synonym">Japanese killifish</name>
    <dbReference type="NCBI Taxonomy" id="8090"/>
    <lineage>
        <taxon>Eukaryota</taxon>
        <taxon>Metazoa</taxon>
        <taxon>Chordata</taxon>
        <taxon>Craniata</taxon>
        <taxon>Vertebrata</taxon>
        <taxon>Euteleostomi</taxon>
        <taxon>Actinopterygii</taxon>
        <taxon>Neopterygii</taxon>
        <taxon>Teleostei</taxon>
        <taxon>Neoteleostei</taxon>
        <taxon>Acanthomorphata</taxon>
        <taxon>Ovalentaria</taxon>
        <taxon>Atherinomorphae</taxon>
        <taxon>Beloniformes</taxon>
        <taxon>Adrianichthyidae</taxon>
        <taxon>Oryziinae</taxon>
        <taxon>Oryzias</taxon>
    </lineage>
</organism>
<protein>
    <recommendedName>
        <fullName>Escargot/snail protein homolog</fullName>
    </recommendedName>
</protein>
<sequence length="46" mass="5218">IRTHTLPCKCPICGKAFSRPWLLQGHTTHHTGEKPFSCQHCNRAFA</sequence>
<keyword id="KW-0238">DNA-binding</keyword>
<keyword id="KW-0479">Metal-binding</keyword>
<keyword id="KW-0539">Nucleus</keyword>
<keyword id="KW-1185">Reference proteome</keyword>
<keyword id="KW-0677">Repeat</keyword>
<keyword id="KW-0862">Zinc</keyword>
<keyword id="KW-0863">Zinc-finger</keyword>
<feature type="chain" id="PRO_0000047044" description="Escargot/snail protein homolog">
    <location>
        <begin position="1" status="less than"/>
        <end position="46" status="greater than"/>
    </location>
</feature>
<feature type="zinc finger region" description="C2H2-type 1" evidence="1">
    <location>
        <begin position="1" status="less than"/>
        <end position="4"/>
    </location>
</feature>
<feature type="zinc finger region" description="C2H2-type 2" evidence="1">
    <location>
        <begin position="8"/>
        <end position="30"/>
    </location>
</feature>
<feature type="zinc finger region" description="C2H2-type 3" evidence="1">
    <location>
        <begin position="36"/>
        <end position="46" status="greater than"/>
    </location>
</feature>
<feature type="non-terminal residue">
    <location>
        <position position="1"/>
    </location>
</feature>
<feature type="non-terminal residue">
    <location>
        <position position="46"/>
    </location>
</feature>
<accession>Q01798</accession>
<dbReference type="EMBL" id="L01603">
    <property type="protein sequence ID" value="AAA49441.1"/>
    <property type="molecule type" value="Genomic_DNA"/>
</dbReference>
<dbReference type="SMR" id="Q01798"/>
<dbReference type="STRING" id="8090.ENSORLP00000026812"/>
<dbReference type="InParanoid" id="Q01798"/>
<dbReference type="Proteomes" id="UP000001038">
    <property type="component" value="Unplaced"/>
</dbReference>
<dbReference type="Proteomes" id="UP000265180">
    <property type="component" value="Chromosome 9"/>
</dbReference>
<dbReference type="Proteomes" id="UP000265200">
    <property type="component" value="Chromosome 9"/>
</dbReference>
<dbReference type="GO" id="GO:0005634">
    <property type="term" value="C:nucleus"/>
    <property type="evidence" value="ECO:0007669"/>
    <property type="project" value="UniProtKB-SubCell"/>
</dbReference>
<dbReference type="GO" id="GO:0003677">
    <property type="term" value="F:DNA binding"/>
    <property type="evidence" value="ECO:0007669"/>
    <property type="project" value="UniProtKB-KW"/>
</dbReference>
<dbReference type="GO" id="GO:0008270">
    <property type="term" value="F:zinc ion binding"/>
    <property type="evidence" value="ECO:0007669"/>
    <property type="project" value="UniProtKB-KW"/>
</dbReference>
<dbReference type="FunFam" id="3.30.160.60:FF:000043">
    <property type="entry name" value="Scratch family zinc finger 2"/>
    <property type="match status" value="1"/>
</dbReference>
<dbReference type="Gene3D" id="3.30.160.60">
    <property type="entry name" value="Classic Zinc Finger"/>
    <property type="match status" value="2"/>
</dbReference>
<dbReference type="InterPro" id="IPR050527">
    <property type="entry name" value="Snail/Krueppel_Znf"/>
</dbReference>
<dbReference type="InterPro" id="IPR036236">
    <property type="entry name" value="Znf_C2H2_sf"/>
</dbReference>
<dbReference type="InterPro" id="IPR013087">
    <property type="entry name" value="Znf_C2H2_type"/>
</dbReference>
<dbReference type="PANTHER" id="PTHR24388:SF54">
    <property type="entry name" value="PROTEIN ESCARGOT"/>
    <property type="match status" value="1"/>
</dbReference>
<dbReference type="PANTHER" id="PTHR24388">
    <property type="entry name" value="ZINC FINGER PROTEIN"/>
    <property type="match status" value="1"/>
</dbReference>
<dbReference type="Pfam" id="PF00096">
    <property type="entry name" value="zf-C2H2"/>
    <property type="match status" value="1"/>
</dbReference>
<dbReference type="SUPFAM" id="SSF57667">
    <property type="entry name" value="beta-beta-alpha zinc fingers"/>
    <property type="match status" value="1"/>
</dbReference>
<dbReference type="PROSITE" id="PS00028">
    <property type="entry name" value="ZINC_FINGER_C2H2_1"/>
    <property type="match status" value="1"/>
</dbReference>
<dbReference type="PROSITE" id="PS50157">
    <property type="entry name" value="ZINC_FINGER_C2H2_2"/>
    <property type="match status" value="1"/>
</dbReference>
<evidence type="ECO:0000255" key="1">
    <source>
        <dbReference type="PROSITE-ProRule" id="PRU00042"/>
    </source>
</evidence>
<evidence type="ECO:0000305" key="2"/>